<dbReference type="EC" id="1.18.1.-"/>
<dbReference type="EMBL" id="U17130">
    <property type="protein sequence ID" value="AAC45752.1"/>
    <property type="molecule type" value="Genomic_DNA"/>
</dbReference>
<dbReference type="RefSeq" id="WP_222671508.1">
    <property type="nucleotide sequence ID" value="NZ_JABBPH010000001.1"/>
</dbReference>
<dbReference type="SMR" id="P43494"/>
<dbReference type="GO" id="GO:0005737">
    <property type="term" value="C:cytoplasm"/>
    <property type="evidence" value="ECO:0007669"/>
    <property type="project" value="TreeGrafter"/>
</dbReference>
<dbReference type="GO" id="GO:0016651">
    <property type="term" value="F:oxidoreductase activity, acting on NAD(P)H"/>
    <property type="evidence" value="ECO:0007669"/>
    <property type="project" value="TreeGrafter"/>
</dbReference>
<dbReference type="Gene3D" id="3.30.390.30">
    <property type="match status" value="1"/>
</dbReference>
<dbReference type="Gene3D" id="3.50.50.60">
    <property type="entry name" value="FAD/NAD(P)-binding domain"/>
    <property type="match status" value="2"/>
</dbReference>
<dbReference type="InterPro" id="IPR050446">
    <property type="entry name" value="FAD-oxidoreductase/Apoptosis"/>
</dbReference>
<dbReference type="InterPro" id="IPR036188">
    <property type="entry name" value="FAD/NAD-bd_sf"/>
</dbReference>
<dbReference type="InterPro" id="IPR023753">
    <property type="entry name" value="FAD/NAD-binding_dom"/>
</dbReference>
<dbReference type="InterPro" id="IPR016156">
    <property type="entry name" value="FAD/NAD-linked_Rdtase_dimer_sf"/>
</dbReference>
<dbReference type="InterPro" id="IPR028202">
    <property type="entry name" value="Reductase_C"/>
</dbReference>
<dbReference type="PANTHER" id="PTHR43557">
    <property type="entry name" value="APOPTOSIS-INDUCING FACTOR 1"/>
    <property type="match status" value="1"/>
</dbReference>
<dbReference type="PANTHER" id="PTHR43557:SF2">
    <property type="entry name" value="RIESKE DOMAIN-CONTAINING PROTEIN-RELATED"/>
    <property type="match status" value="1"/>
</dbReference>
<dbReference type="Pfam" id="PF07992">
    <property type="entry name" value="Pyr_redox_2"/>
    <property type="match status" value="1"/>
</dbReference>
<dbReference type="Pfam" id="PF14759">
    <property type="entry name" value="Reductase_C"/>
    <property type="match status" value="1"/>
</dbReference>
<dbReference type="PRINTS" id="PR00368">
    <property type="entry name" value="FADPNR"/>
</dbReference>
<dbReference type="PRINTS" id="PR00411">
    <property type="entry name" value="PNDRDTASEI"/>
</dbReference>
<dbReference type="SUPFAM" id="SSF51905">
    <property type="entry name" value="FAD/NAD(P)-binding domain"/>
    <property type="match status" value="2"/>
</dbReference>
<dbReference type="SUPFAM" id="SSF55424">
    <property type="entry name" value="FAD/NAD-linked reductases, dimerisation (C-terminal) domain"/>
    <property type="match status" value="1"/>
</dbReference>
<keyword id="KW-0903">Direct protein sequencing</keyword>
<keyword id="KW-0274">FAD</keyword>
<keyword id="KW-0285">Flavoprotein</keyword>
<keyword id="KW-0520">NAD</keyword>
<keyword id="KW-0560">Oxidoreductase</keyword>
<protein>
    <recommendedName>
        <fullName>Rhodocoxin reductase</fullName>
        <ecNumber>1.18.1.-</ecNumber>
    </recommendedName>
</protein>
<feature type="initiator methionine" description="Removed" evidence="2">
    <location>
        <position position="1"/>
    </location>
</feature>
<feature type="chain" id="PRO_0000167647" description="Rhodocoxin reductase">
    <location>
        <begin position="2"/>
        <end position="427"/>
    </location>
</feature>
<feature type="binding site" evidence="1">
    <location>
        <begin position="2"/>
        <end position="34"/>
    </location>
    <ligand>
        <name>FAD</name>
        <dbReference type="ChEBI" id="CHEBI:57692"/>
    </ligand>
</feature>
<feature type="binding site" evidence="1">
    <location>
        <begin position="144"/>
        <end position="172"/>
    </location>
    <ligand>
        <name>NAD(+)</name>
        <dbReference type="ChEBI" id="CHEBI:57540"/>
    </ligand>
</feature>
<proteinExistence type="evidence at protein level"/>
<accession>P43494</accession>
<reference key="1">
    <citation type="journal article" date="1995" name="J. Bacteriol.">
        <title>Degradation of the thiocarbamate herbicide EPTC (S-ethyl dipropylcarbamothioate) and biosafening by Rhodococcus sp. strain NI86/21 involve an inducible cytochrome P-450 system and aldehyde dehydrogenase.</title>
        <authorList>
            <person name="Nagy I."/>
            <person name="Schoofs G."/>
            <person name="Compernolle F."/>
            <person name="Proost P."/>
            <person name="Vanderleyden J."/>
            <person name="de Mot R."/>
        </authorList>
    </citation>
    <scope>NUCLEOTIDE SEQUENCE [GENOMIC DNA]</scope>
    <scope>PROTEIN SEQUENCE OF 2-11</scope>
    <source>
        <strain>NI86/21</strain>
    </source>
</reference>
<sequence>MSIVIIGSGQAGFEAAVSLRSHGFSGTITLVGDEPGVPYQRPPLSKAYLHSDPDRESLALRPAQYFDDHRITLTCGKPVVRIDRDAQRVELIDATAIEYDHLILATGARNRLLPVPGANLPGVHYLRTAGEAESLTSSMASCSSLVVIGAGFIGLEVAAAARKKGLDVTVVEAMDRPMARALSSVMSGYFSTAHTEHGVHMRLSTGVKTINAADGRAAGVTTNSGDVIHADAVVVGIGVVPNIELAALTGLPVDNGIVVDEYLRTPDENISAIGDCAAYPIPGKAGLVRLESVQNAVDQARCLAAQLTGTSTHYRSVPWFWSEQYESKLQMAGLTAGADTHVVRGSVDSGVFSIFCFLGTRLLGVESVNKPRDHMAARKILATEMPLTPEQAADTDFDLKLAIARHKDTHKDEVASADIGERQVVAS</sequence>
<comment type="function">
    <text>The degradation of the thiocarbamate herbicide EPTC by cytochrome CYP116 (thcB) requires the participation of a flavoprotein, rhodocoxin reductase, and an iron-sulfur protein, rhodocoxin, to mediate the transfer of electrons from NADH to P450 for oxygen activation.</text>
</comment>
<comment type="cofactor">
    <cofactor>
        <name>FAD</name>
        <dbReference type="ChEBI" id="CHEBI:57692"/>
    </cofactor>
</comment>
<comment type="similarity">
    <text evidence="3">Belongs to the FAD-dependent oxidoreductase family.</text>
</comment>
<name>THCD_RHOER</name>
<evidence type="ECO:0000255" key="1"/>
<evidence type="ECO:0000269" key="2">
    <source>
    </source>
</evidence>
<evidence type="ECO:0000305" key="3"/>
<organism>
    <name type="scientific">Rhodococcus erythropolis</name>
    <name type="common">Arthrobacter picolinophilus</name>
    <dbReference type="NCBI Taxonomy" id="1833"/>
    <lineage>
        <taxon>Bacteria</taxon>
        <taxon>Bacillati</taxon>
        <taxon>Actinomycetota</taxon>
        <taxon>Actinomycetes</taxon>
        <taxon>Mycobacteriales</taxon>
        <taxon>Nocardiaceae</taxon>
        <taxon>Rhodococcus</taxon>
        <taxon>Rhodococcus erythropolis group</taxon>
    </lineage>
</organism>
<gene>
    <name type="primary">thcD</name>
</gene>